<gene>
    <name evidence="1" type="primary">dxr</name>
    <name type="ordered locus">HP_0216</name>
</gene>
<name>DXR_HELPY</name>
<sequence>MVVLGSTGSIGKNALKIAKKFGIEIEALSCGKNIALINEQIQVFKPKKVAILDPSDLNDLEPLGAEVFVGLEGIDAMIEECTSNLVLNAIVGVAGLKASFKSLQRNKKLALANKESLVSAGHLLDISQITPIDSEHFGLWALLQNKTLKPKSLIISASGGAFRDTPLEFIPIQNAQNALKHPNWSMGSKITIDSASMVNKLFEILETYWLFGASLKIDALIERSSIVHALVEFEDNSIIAHLASADMQLPISYAIDPKLASLSASIKPLDLYALSAIKFEPISMERYTLWCYKDLLLENPKLGVVLNASNEVAMEKFLNKEIAFGGLIQTISQALESYDKMPFKLSSLEEVLELDKEVRERFKNVAGV</sequence>
<keyword id="KW-0414">Isoprene biosynthesis</keyword>
<keyword id="KW-0464">Manganese</keyword>
<keyword id="KW-0479">Metal-binding</keyword>
<keyword id="KW-0521">NADP</keyword>
<keyword id="KW-0560">Oxidoreductase</keyword>
<keyword id="KW-1185">Reference proteome</keyword>
<organism>
    <name type="scientific">Helicobacter pylori (strain ATCC 700392 / 26695)</name>
    <name type="common">Campylobacter pylori</name>
    <dbReference type="NCBI Taxonomy" id="85962"/>
    <lineage>
        <taxon>Bacteria</taxon>
        <taxon>Pseudomonadati</taxon>
        <taxon>Campylobacterota</taxon>
        <taxon>Epsilonproteobacteria</taxon>
        <taxon>Campylobacterales</taxon>
        <taxon>Helicobacteraceae</taxon>
        <taxon>Helicobacter</taxon>
    </lineage>
</organism>
<accession>P56139</accession>
<comment type="function">
    <text evidence="1">Catalyzes the NADPH-dependent rearrangement and reduction of 1-deoxy-D-xylulose-5-phosphate (DXP) to 2-C-methyl-D-erythritol 4-phosphate (MEP).</text>
</comment>
<comment type="catalytic activity">
    <reaction evidence="1">
        <text>2-C-methyl-D-erythritol 4-phosphate + NADP(+) = 1-deoxy-D-xylulose 5-phosphate + NADPH + H(+)</text>
        <dbReference type="Rhea" id="RHEA:13717"/>
        <dbReference type="ChEBI" id="CHEBI:15378"/>
        <dbReference type="ChEBI" id="CHEBI:57783"/>
        <dbReference type="ChEBI" id="CHEBI:57792"/>
        <dbReference type="ChEBI" id="CHEBI:58262"/>
        <dbReference type="ChEBI" id="CHEBI:58349"/>
        <dbReference type="EC" id="1.1.1.267"/>
    </reaction>
    <physiologicalReaction direction="right-to-left" evidence="1">
        <dbReference type="Rhea" id="RHEA:13719"/>
    </physiologicalReaction>
</comment>
<comment type="cofactor">
    <cofactor evidence="1">
        <name>Mg(2+)</name>
        <dbReference type="ChEBI" id="CHEBI:18420"/>
    </cofactor>
    <cofactor evidence="1">
        <name>Mn(2+)</name>
        <dbReference type="ChEBI" id="CHEBI:29035"/>
    </cofactor>
</comment>
<comment type="pathway">
    <text evidence="1">Isoprenoid biosynthesis; isopentenyl diphosphate biosynthesis via DXP pathway; isopentenyl diphosphate from 1-deoxy-D-xylulose 5-phosphate: step 1/6.</text>
</comment>
<comment type="similarity">
    <text evidence="1">Belongs to the DXR family.</text>
</comment>
<protein>
    <recommendedName>
        <fullName evidence="1">1-deoxy-D-xylulose 5-phosphate reductoisomerase</fullName>
        <shortName evidence="1">DXP reductoisomerase</shortName>
        <ecNumber evidence="1">1.1.1.267</ecNumber>
    </recommendedName>
    <alternativeName>
        <fullName evidence="1">1-deoxyxylulose-5-phosphate reductoisomerase</fullName>
    </alternativeName>
    <alternativeName>
        <fullName evidence="1">2-C-methyl-D-erythritol 4-phosphate synthase</fullName>
    </alternativeName>
</protein>
<feature type="chain" id="PRO_0000163663" description="1-deoxy-D-xylulose 5-phosphate reductoisomerase">
    <location>
        <begin position="1"/>
        <end position="368"/>
    </location>
</feature>
<feature type="binding site" evidence="1">
    <location>
        <position position="7"/>
    </location>
    <ligand>
        <name>NADPH</name>
        <dbReference type="ChEBI" id="CHEBI:57783"/>
    </ligand>
</feature>
<feature type="binding site" evidence="1">
    <location>
        <position position="8"/>
    </location>
    <ligand>
        <name>NADPH</name>
        <dbReference type="ChEBI" id="CHEBI:57783"/>
    </ligand>
</feature>
<feature type="binding site" evidence="1">
    <location>
        <position position="9"/>
    </location>
    <ligand>
        <name>NADPH</name>
        <dbReference type="ChEBI" id="CHEBI:57783"/>
    </ligand>
</feature>
<feature type="binding site" evidence="1">
    <location>
        <position position="10"/>
    </location>
    <ligand>
        <name>NADPH</name>
        <dbReference type="ChEBI" id="CHEBI:57783"/>
    </ligand>
</feature>
<feature type="binding site" evidence="1">
    <location>
        <position position="31"/>
    </location>
    <ligand>
        <name>NADPH</name>
        <dbReference type="ChEBI" id="CHEBI:57783"/>
    </ligand>
</feature>
<feature type="binding site" evidence="1">
    <location>
        <position position="32"/>
    </location>
    <ligand>
        <name>NADPH</name>
        <dbReference type="ChEBI" id="CHEBI:57783"/>
    </ligand>
</feature>
<feature type="binding site" evidence="1">
    <location>
        <position position="33"/>
    </location>
    <ligand>
        <name>NADPH</name>
        <dbReference type="ChEBI" id="CHEBI:57783"/>
    </ligand>
</feature>
<feature type="binding site" evidence="1">
    <location>
        <position position="113"/>
    </location>
    <ligand>
        <name>NADPH</name>
        <dbReference type="ChEBI" id="CHEBI:57783"/>
    </ligand>
</feature>
<feature type="binding site" evidence="1">
    <location>
        <position position="114"/>
    </location>
    <ligand>
        <name>1-deoxy-D-xylulose 5-phosphate</name>
        <dbReference type="ChEBI" id="CHEBI:57792"/>
    </ligand>
</feature>
<feature type="binding site" evidence="1">
    <location>
        <position position="115"/>
    </location>
    <ligand>
        <name>NADPH</name>
        <dbReference type="ChEBI" id="CHEBI:57783"/>
    </ligand>
</feature>
<feature type="binding site" evidence="1">
    <location>
        <position position="133"/>
    </location>
    <ligand>
        <name>Mn(2+)</name>
        <dbReference type="ChEBI" id="CHEBI:29035"/>
    </ligand>
</feature>
<feature type="binding site" evidence="1">
    <location>
        <position position="134"/>
    </location>
    <ligand>
        <name>1-deoxy-D-xylulose 5-phosphate</name>
        <dbReference type="ChEBI" id="CHEBI:57792"/>
    </ligand>
</feature>
<feature type="binding site" evidence="1">
    <location>
        <position position="135"/>
    </location>
    <ligand>
        <name>1-deoxy-D-xylulose 5-phosphate</name>
        <dbReference type="ChEBI" id="CHEBI:57792"/>
    </ligand>
</feature>
<feature type="binding site" evidence="1">
    <location>
        <position position="135"/>
    </location>
    <ligand>
        <name>Mn(2+)</name>
        <dbReference type="ChEBI" id="CHEBI:29035"/>
    </ligand>
</feature>
<feature type="binding site" evidence="1">
    <location>
        <position position="158"/>
    </location>
    <ligand>
        <name>1-deoxy-D-xylulose 5-phosphate</name>
        <dbReference type="ChEBI" id="CHEBI:57792"/>
    </ligand>
</feature>
<feature type="binding site" evidence="1">
    <location>
        <position position="181"/>
    </location>
    <ligand>
        <name>1-deoxy-D-xylulose 5-phosphate</name>
        <dbReference type="ChEBI" id="CHEBI:57792"/>
    </ligand>
</feature>
<feature type="binding site" evidence="1">
    <location>
        <position position="187"/>
    </location>
    <ligand>
        <name>NADPH</name>
        <dbReference type="ChEBI" id="CHEBI:57783"/>
    </ligand>
</feature>
<feature type="binding site" evidence="1">
    <location>
        <position position="194"/>
    </location>
    <ligand>
        <name>1-deoxy-D-xylulose 5-phosphate</name>
        <dbReference type="ChEBI" id="CHEBI:57792"/>
    </ligand>
</feature>
<feature type="binding site" evidence="1">
    <location>
        <position position="199"/>
    </location>
    <ligand>
        <name>1-deoxy-D-xylulose 5-phosphate</name>
        <dbReference type="ChEBI" id="CHEBI:57792"/>
    </ligand>
</feature>
<feature type="binding site" evidence="1">
    <location>
        <position position="200"/>
    </location>
    <ligand>
        <name>1-deoxy-D-xylulose 5-phosphate</name>
        <dbReference type="ChEBI" id="CHEBI:57792"/>
    </ligand>
</feature>
<feature type="binding site" evidence="1">
    <location>
        <position position="203"/>
    </location>
    <ligand>
        <name>1-deoxy-D-xylulose 5-phosphate</name>
        <dbReference type="ChEBI" id="CHEBI:57792"/>
    </ligand>
</feature>
<feature type="binding site" evidence="1">
    <location>
        <position position="203"/>
    </location>
    <ligand>
        <name>Mn(2+)</name>
        <dbReference type="ChEBI" id="CHEBI:29035"/>
    </ligand>
</feature>
<proteinExistence type="inferred from homology"/>
<reference key="1">
    <citation type="journal article" date="1997" name="Nature">
        <title>The complete genome sequence of the gastric pathogen Helicobacter pylori.</title>
        <authorList>
            <person name="Tomb J.-F."/>
            <person name="White O."/>
            <person name="Kerlavage A.R."/>
            <person name="Clayton R.A."/>
            <person name="Sutton G.G."/>
            <person name="Fleischmann R.D."/>
            <person name="Ketchum K.A."/>
            <person name="Klenk H.-P."/>
            <person name="Gill S.R."/>
            <person name="Dougherty B.A."/>
            <person name="Nelson K.E."/>
            <person name="Quackenbush J."/>
            <person name="Zhou L."/>
            <person name="Kirkness E.F."/>
            <person name="Peterson S.N."/>
            <person name="Loftus B.J."/>
            <person name="Richardson D.L."/>
            <person name="Dodson R.J."/>
            <person name="Khalak H.G."/>
            <person name="Glodek A."/>
            <person name="McKenney K."/>
            <person name="FitzGerald L.M."/>
            <person name="Lee N."/>
            <person name="Adams M.D."/>
            <person name="Hickey E.K."/>
            <person name="Berg D.E."/>
            <person name="Gocayne J.D."/>
            <person name="Utterback T.R."/>
            <person name="Peterson J.D."/>
            <person name="Kelley J.M."/>
            <person name="Cotton M.D."/>
            <person name="Weidman J.F."/>
            <person name="Fujii C."/>
            <person name="Bowman C."/>
            <person name="Watthey L."/>
            <person name="Wallin E."/>
            <person name="Hayes W.S."/>
            <person name="Borodovsky M."/>
            <person name="Karp P.D."/>
            <person name="Smith H.O."/>
            <person name="Fraser C.M."/>
            <person name="Venter J.C."/>
        </authorList>
    </citation>
    <scope>NUCLEOTIDE SEQUENCE [LARGE SCALE GENOMIC DNA]</scope>
    <source>
        <strain>ATCC 700392 / 26695</strain>
    </source>
</reference>
<evidence type="ECO:0000255" key="1">
    <source>
        <dbReference type="HAMAP-Rule" id="MF_00183"/>
    </source>
</evidence>
<dbReference type="EC" id="1.1.1.267" evidence="1"/>
<dbReference type="EMBL" id="AE000511">
    <property type="protein sequence ID" value="AAD07284.1"/>
    <property type="molecule type" value="Genomic_DNA"/>
</dbReference>
<dbReference type="PIR" id="H64546">
    <property type="entry name" value="H64546"/>
</dbReference>
<dbReference type="RefSeq" id="NP_207014.1">
    <property type="nucleotide sequence ID" value="NC_000915.1"/>
</dbReference>
<dbReference type="RefSeq" id="WP_000260724.1">
    <property type="nucleotide sequence ID" value="NC_018939.1"/>
</dbReference>
<dbReference type="SMR" id="P56139"/>
<dbReference type="DIP" id="DIP-3148N"/>
<dbReference type="FunCoup" id="P56139">
    <property type="interactions" value="265"/>
</dbReference>
<dbReference type="IntAct" id="P56139">
    <property type="interactions" value="1"/>
</dbReference>
<dbReference type="MINT" id="P56139"/>
<dbReference type="STRING" id="85962.HP_0216"/>
<dbReference type="PaxDb" id="85962-C694_01090"/>
<dbReference type="EnsemblBacteria" id="AAD07284">
    <property type="protein sequence ID" value="AAD07284"/>
    <property type="gene ID" value="HP_0216"/>
</dbReference>
<dbReference type="KEGG" id="heo:C694_01090"/>
<dbReference type="KEGG" id="hpy:HP_0216"/>
<dbReference type="PATRIC" id="fig|85962.47.peg.234"/>
<dbReference type="eggNOG" id="COG0743">
    <property type="taxonomic scope" value="Bacteria"/>
</dbReference>
<dbReference type="InParanoid" id="P56139"/>
<dbReference type="OrthoDB" id="9806546at2"/>
<dbReference type="PhylomeDB" id="P56139"/>
<dbReference type="UniPathway" id="UPA00056">
    <property type="reaction ID" value="UER00092"/>
</dbReference>
<dbReference type="Proteomes" id="UP000000429">
    <property type="component" value="Chromosome"/>
</dbReference>
<dbReference type="GO" id="GO:0030604">
    <property type="term" value="F:1-deoxy-D-xylulose-5-phosphate reductoisomerase activity"/>
    <property type="evidence" value="ECO:0000318"/>
    <property type="project" value="GO_Central"/>
</dbReference>
<dbReference type="GO" id="GO:0030145">
    <property type="term" value="F:manganese ion binding"/>
    <property type="evidence" value="ECO:0000318"/>
    <property type="project" value="GO_Central"/>
</dbReference>
<dbReference type="GO" id="GO:0070402">
    <property type="term" value="F:NADPH binding"/>
    <property type="evidence" value="ECO:0000318"/>
    <property type="project" value="GO_Central"/>
</dbReference>
<dbReference type="GO" id="GO:0051484">
    <property type="term" value="P:isopentenyl diphosphate biosynthetic process, methylerythritol 4-phosphate pathway involved in terpenoid biosynthetic process"/>
    <property type="evidence" value="ECO:0000318"/>
    <property type="project" value="GO_Central"/>
</dbReference>
<dbReference type="FunFam" id="3.40.50.720:FF:000771">
    <property type="entry name" value="1-deoxy-D-xylulose 5-phosphate reductoisomerase"/>
    <property type="match status" value="1"/>
</dbReference>
<dbReference type="Gene3D" id="1.10.1740.10">
    <property type="match status" value="1"/>
</dbReference>
<dbReference type="Gene3D" id="3.40.50.720">
    <property type="entry name" value="NAD(P)-binding Rossmann-like Domain"/>
    <property type="match status" value="1"/>
</dbReference>
<dbReference type="HAMAP" id="MF_00183">
    <property type="entry name" value="DXP_reductoisom"/>
    <property type="match status" value="1"/>
</dbReference>
<dbReference type="InterPro" id="IPR003821">
    <property type="entry name" value="DXP_reductoisomerase"/>
</dbReference>
<dbReference type="InterPro" id="IPR013644">
    <property type="entry name" value="DXP_reductoisomerase_C"/>
</dbReference>
<dbReference type="InterPro" id="IPR013512">
    <property type="entry name" value="DXP_reductoisomerase_N"/>
</dbReference>
<dbReference type="InterPro" id="IPR026877">
    <property type="entry name" value="DXPR_C"/>
</dbReference>
<dbReference type="InterPro" id="IPR036169">
    <property type="entry name" value="DXPR_C_sf"/>
</dbReference>
<dbReference type="InterPro" id="IPR036291">
    <property type="entry name" value="NAD(P)-bd_dom_sf"/>
</dbReference>
<dbReference type="NCBIfam" id="TIGR00243">
    <property type="entry name" value="Dxr"/>
    <property type="match status" value="1"/>
</dbReference>
<dbReference type="PANTHER" id="PTHR30525">
    <property type="entry name" value="1-DEOXY-D-XYLULOSE 5-PHOSPHATE REDUCTOISOMERASE"/>
    <property type="match status" value="1"/>
</dbReference>
<dbReference type="PANTHER" id="PTHR30525:SF0">
    <property type="entry name" value="1-DEOXY-D-XYLULOSE 5-PHOSPHATE REDUCTOISOMERASE, CHLOROPLASTIC"/>
    <property type="match status" value="1"/>
</dbReference>
<dbReference type="Pfam" id="PF08436">
    <property type="entry name" value="DXP_redisom_C"/>
    <property type="match status" value="1"/>
</dbReference>
<dbReference type="Pfam" id="PF02670">
    <property type="entry name" value="DXP_reductoisom"/>
    <property type="match status" value="1"/>
</dbReference>
<dbReference type="Pfam" id="PF13288">
    <property type="entry name" value="DXPR_C"/>
    <property type="match status" value="1"/>
</dbReference>
<dbReference type="PIRSF" id="PIRSF006205">
    <property type="entry name" value="Dxp_reductismrs"/>
    <property type="match status" value="1"/>
</dbReference>
<dbReference type="SUPFAM" id="SSF69055">
    <property type="entry name" value="1-deoxy-D-xylulose-5-phosphate reductoisomerase, C-terminal domain"/>
    <property type="match status" value="1"/>
</dbReference>
<dbReference type="SUPFAM" id="SSF55347">
    <property type="entry name" value="Glyceraldehyde-3-phosphate dehydrogenase-like, C-terminal domain"/>
    <property type="match status" value="1"/>
</dbReference>
<dbReference type="SUPFAM" id="SSF51735">
    <property type="entry name" value="NAD(P)-binding Rossmann-fold domains"/>
    <property type="match status" value="1"/>
</dbReference>